<reference key="1">
    <citation type="journal article" date="2000" name="Nature">
        <title>Sequence and analysis of chromosome 5 of the plant Arabidopsis thaliana.</title>
        <authorList>
            <person name="Tabata S."/>
            <person name="Kaneko T."/>
            <person name="Nakamura Y."/>
            <person name="Kotani H."/>
            <person name="Kato T."/>
            <person name="Asamizu E."/>
            <person name="Miyajima N."/>
            <person name="Sasamoto S."/>
            <person name="Kimura T."/>
            <person name="Hosouchi T."/>
            <person name="Kawashima K."/>
            <person name="Kohara M."/>
            <person name="Matsumoto M."/>
            <person name="Matsuno A."/>
            <person name="Muraki A."/>
            <person name="Nakayama S."/>
            <person name="Nakazaki N."/>
            <person name="Naruo K."/>
            <person name="Okumura S."/>
            <person name="Shinpo S."/>
            <person name="Takeuchi C."/>
            <person name="Wada T."/>
            <person name="Watanabe A."/>
            <person name="Yamada M."/>
            <person name="Yasuda M."/>
            <person name="Sato S."/>
            <person name="de la Bastide M."/>
            <person name="Huang E."/>
            <person name="Spiegel L."/>
            <person name="Gnoj L."/>
            <person name="O'Shaughnessy A."/>
            <person name="Preston R."/>
            <person name="Habermann K."/>
            <person name="Murray J."/>
            <person name="Johnson D."/>
            <person name="Rohlfing T."/>
            <person name="Nelson J."/>
            <person name="Stoneking T."/>
            <person name="Pepin K."/>
            <person name="Spieth J."/>
            <person name="Sekhon M."/>
            <person name="Armstrong J."/>
            <person name="Becker M."/>
            <person name="Belter E."/>
            <person name="Cordum H."/>
            <person name="Cordes M."/>
            <person name="Courtney L."/>
            <person name="Courtney W."/>
            <person name="Dante M."/>
            <person name="Du H."/>
            <person name="Edwards J."/>
            <person name="Fryman J."/>
            <person name="Haakensen B."/>
            <person name="Lamar E."/>
            <person name="Latreille P."/>
            <person name="Leonard S."/>
            <person name="Meyer R."/>
            <person name="Mulvaney E."/>
            <person name="Ozersky P."/>
            <person name="Riley A."/>
            <person name="Strowmatt C."/>
            <person name="Wagner-McPherson C."/>
            <person name="Wollam A."/>
            <person name="Yoakum M."/>
            <person name="Bell M."/>
            <person name="Dedhia N."/>
            <person name="Parnell L."/>
            <person name="Shah R."/>
            <person name="Rodriguez M."/>
            <person name="Hoon See L."/>
            <person name="Vil D."/>
            <person name="Baker J."/>
            <person name="Kirchoff K."/>
            <person name="Toth K."/>
            <person name="King L."/>
            <person name="Bahret A."/>
            <person name="Miller B."/>
            <person name="Marra M.A."/>
            <person name="Martienssen R."/>
            <person name="McCombie W.R."/>
            <person name="Wilson R.K."/>
            <person name="Murphy G."/>
            <person name="Bancroft I."/>
            <person name="Volckaert G."/>
            <person name="Wambutt R."/>
            <person name="Duesterhoeft A."/>
            <person name="Stiekema W."/>
            <person name="Pohl T."/>
            <person name="Entian K.-D."/>
            <person name="Terryn N."/>
            <person name="Hartley N."/>
            <person name="Bent E."/>
            <person name="Johnson S."/>
            <person name="Langham S.-A."/>
            <person name="McCullagh B."/>
            <person name="Robben J."/>
            <person name="Grymonprez B."/>
            <person name="Zimmermann W."/>
            <person name="Ramsperger U."/>
            <person name="Wedler H."/>
            <person name="Balke K."/>
            <person name="Wedler E."/>
            <person name="Peters S."/>
            <person name="van Staveren M."/>
            <person name="Dirkse W."/>
            <person name="Mooijman P."/>
            <person name="Klein Lankhorst R."/>
            <person name="Weitzenegger T."/>
            <person name="Bothe G."/>
            <person name="Rose M."/>
            <person name="Hauf J."/>
            <person name="Berneiser S."/>
            <person name="Hempel S."/>
            <person name="Feldpausch M."/>
            <person name="Lamberth S."/>
            <person name="Villarroel R."/>
            <person name="Gielen J."/>
            <person name="Ardiles W."/>
            <person name="Bents O."/>
            <person name="Lemcke K."/>
            <person name="Kolesov G."/>
            <person name="Mayer K.F.X."/>
            <person name="Rudd S."/>
            <person name="Schoof H."/>
            <person name="Schueller C."/>
            <person name="Zaccaria P."/>
            <person name="Mewes H.-W."/>
            <person name="Bevan M."/>
            <person name="Fransz P.F."/>
        </authorList>
    </citation>
    <scope>NUCLEOTIDE SEQUENCE [LARGE SCALE GENOMIC DNA]</scope>
    <source>
        <strain>cv. Columbia</strain>
    </source>
</reference>
<reference key="2">
    <citation type="journal article" date="2017" name="Plant J.">
        <title>Araport11: a complete reannotation of the Arabidopsis thaliana reference genome.</title>
        <authorList>
            <person name="Cheng C.Y."/>
            <person name="Krishnakumar V."/>
            <person name="Chan A.P."/>
            <person name="Thibaud-Nissen F."/>
            <person name="Schobel S."/>
            <person name="Town C.D."/>
        </authorList>
    </citation>
    <scope>GENOME REANNOTATION</scope>
    <source>
        <strain>cv. Columbia</strain>
    </source>
</reference>
<reference key="3">
    <citation type="journal article" date="2003" name="Science">
        <title>Empirical analysis of transcriptional activity in the Arabidopsis genome.</title>
        <authorList>
            <person name="Yamada K."/>
            <person name="Lim J."/>
            <person name="Dale J.M."/>
            <person name="Chen H."/>
            <person name="Shinn P."/>
            <person name="Palm C.J."/>
            <person name="Southwick A.M."/>
            <person name="Wu H.C."/>
            <person name="Kim C.J."/>
            <person name="Nguyen M."/>
            <person name="Pham P.K."/>
            <person name="Cheuk R.F."/>
            <person name="Karlin-Newmann G."/>
            <person name="Liu S.X."/>
            <person name="Lam B."/>
            <person name="Sakano H."/>
            <person name="Wu T."/>
            <person name="Yu G."/>
            <person name="Miranda M."/>
            <person name="Quach H.L."/>
            <person name="Tripp M."/>
            <person name="Chang C.H."/>
            <person name="Lee J.M."/>
            <person name="Toriumi M.J."/>
            <person name="Chan M.M."/>
            <person name="Tang C.C."/>
            <person name="Onodera C.S."/>
            <person name="Deng J.M."/>
            <person name="Akiyama K."/>
            <person name="Ansari Y."/>
            <person name="Arakawa T."/>
            <person name="Banh J."/>
            <person name="Banno F."/>
            <person name="Bowser L."/>
            <person name="Brooks S.Y."/>
            <person name="Carninci P."/>
            <person name="Chao Q."/>
            <person name="Choy N."/>
            <person name="Enju A."/>
            <person name="Goldsmith A.D."/>
            <person name="Gurjal M."/>
            <person name="Hansen N.F."/>
            <person name="Hayashizaki Y."/>
            <person name="Johnson-Hopson C."/>
            <person name="Hsuan V.W."/>
            <person name="Iida K."/>
            <person name="Karnes M."/>
            <person name="Khan S."/>
            <person name="Koesema E."/>
            <person name="Ishida J."/>
            <person name="Jiang P.X."/>
            <person name="Jones T."/>
            <person name="Kawai J."/>
            <person name="Kamiya A."/>
            <person name="Meyers C."/>
            <person name="Nakajima M."/>
            <person name="Narusaka M."/>
            <person name="Seki M."/>
            <person name="Sakurai T."/>
            <person name="Satou M."/>
            <person name="Tamse R."/>
            <person name="Vaysberg M."/>
            <person name="Wallender E.K."/>
            <person name="Wong C."/>
            <person name="Yamamura Y."/>
            <person name="Yuan S."/>
            <person name="Shinozaki K."/>
            <person name="Davis R.W."/>
            <person name="Theologis A."/>
            <person name="Ecker J.R."/>
        </authorList>
    </citation>
    <scope>NUCLEOTIDE SEQUENCE [LARGE SCALE MRNA]</scope>
    <source>
        <strain>cv. Columbia</strain>
    </source>
</reference>
<reference key="4">
    <citation type="journal article" date="2005" name="Plant Cell">
        <title>An Arabidopsis homeodomain transcription factor, OVEREXPRESSOR OF CATIONIC PEROXIDASE 3, mediates resistance to infection by necrotrophic pathogens.</title>
        <authorList>
            <person name="Coego A."/>
            <person name="Ramirez V."/>
            <person name="Gil M.J."/>
            <person name="Flors V."/>
            <person name="Mauch-Mani B."/>
            <person name="Vera P."/>
        </authorList>
    </citation>
    <scope>FUNCTION</scope>
    <scope>MUTAGENESIS OF ALA-211</scope>
    <scope>INDUCTION</scope>
    <scope>SUBCELLULAR LOCATION</scope>
    <source>
        <strain>cv. Columbia</strain>
    </source>
</reference>
<reference key="5">
    <citation type="journal article" date="2009" name="Plant J.">
        <title>Drought tolerance in Arabidopsis is controlled by the OCP3 disease resistance regulator.</title>
        <authorList>
            <person name="Ramirez V."/>
            <person name="Coego A."/>
            <person name="Lopez A."/>
            <person name="Agorio A."/>
            <person name="Flors V."/>
            <person name="Vera P."/>
        </authorList>
    </citation>
    <scope>FUNCTION</scope>
    <scope>MUTAGENESIS OF ALA-211</scope>
    <scope>INDUCTION BY DROUGHT AND ABSCISIC ACID</scope>
    <source>
        <strain>cv. Columbia</strain>
    </source>
</reference>
<reference key="6">
    <citation type="journal article" date="2010" name="BMC Plant Biol.">
        <title>OCP3 is an important modulator of NPR1-mediated jasmonic acid-dependent induced defenses in Arabidopsis.</title>
        <authorList>
            <person name="Ramirez V."/>
            <person name="Van der Ent S."/>
            <person name="Garcia-Andrade J."/>
            <person name="Coego A."/>
            <person name="Pieterse C.M."/>
            <person name="Vera P."/>
        </authorList>
    </citation>
    <scope>FUNCTION</scope>
    <scope>MUTAGENESIS OF ALA-211</scope>
    <source>
        <strain>cv. Columbia</strain>
    </source>
</reference>
<reference key="7">
    <citation type="journal article" date="2011" name="Plant J.">
        <title>Arabidopsis ocp3 mutant reveals a mechanism linking ABA and JA to pathogen-induced callose deposition.</title>
        <authorList>
            <person name="Garcia-Andrade J."/>
            <person name="Ramirez V."/>
            <person name="Flors V."/>
            <person name="Vera P."/>
        </authorList>
    </citation>
    <scope>FUNCTION</scope>
    <scope>MUTAGENESIS OF ALA-211</scope>
    <source>
        <strain>cv. Columbia</strain>
    </source>
</reference>
<feature type="chain" id="PRO_0000432549" description="Protein OVEREXPRESSOR OF CATIONIC PEROXIDASE 3">
    <location>
        <begin position="1"/>
        <end position="354"/>
    </location>
</feature>
<feature type="DNA-binding region" description="Homeobox" evidence="2">
    <location>
        <begin position="286"/>
        <end position="345"/>
    </location>
</feature>
<feature type="region of interest" description="Disordered" evidence="4">
    <location>
        <begin position="65"/>
        <end position="98"/>
    </location>
</feature>
<feature type="region of interest" description="Disordered" evidence="4">
    <location>
        <begin position="151"/>
        <end position="186"/>
    </location>
</feature>
<feature type="region of interest" description="Disordered" evidence="4">
    <location>
        <begin position="243"/>
        <end position="264"/>
    </location>
</feature>
<feature type="short sequence motif" description="Nuclear localization signal 1" evidence="3">
    <location>
        <begin position="63"/>
        <end position="70"/>
    </location>
</feature>
<feature type="short sequence motif" description="Nuclear localization signal 2" evidence="3">
    <location>
        <begin position="191"/>
        <end position="198"/>
    </location>
</feature>
<feature type="short sequence motif" description="Nuclear localization signal 3" evidence="3">
    <location>
        <begin position="293"/>
        <end position="300"/>
    </location>
</feature>
<feature type="compositionally biased region" description="Acidic residues" evidence="4">
    <location>
        <begin position="154"/>
        <end position="181"/>
    </location>
</feature>
<feature type="mutagenesis site" description="In ocp3; increased accumulation of H(2)O(2), abscisic acid (ABA) and constitutive expression of GSTF6/GST1 and PDF1.2A defense genes. Enhanced resistance to the necrotrophic pathogens Botrytis cinerea and Plectosphaerella cucumerina in a jasmonic acid-dependent manner, due, at least, to ABA-dependent intensified callose deposition. Higher drought resistance in an ABA-dependent manner associated with better stomatal closure. Increased sensitivity to plant growth inhibition by ABA. Impaired in Pseudomonas fluorescens WCS417r-triggered induced systemic resistance (ISR) against both Pseudomonas syringae DC3000 and Hyaloperonospora arabidopsidis." evidence="5 6 7 8">
    <original>A</original>
    <variation>T</variation>
    <location>
        <position position="211"/>
    </location>
</feature>
<comment type="function">
    <text evidence="1 5 6 7 8">May modulate chromatin structure by regulation of nucleosome assembly/disassembly (By similarity). Homeodomain transcription factor that mediates jasmonic acid (JA)-mediated COI1-dependent and abscisic acid (ABA)-mediated PMR4-dependent resistance to infection by necrotrophic fungal pathogens (e.g. B.cinerea and P.cucumerina) and bacterial pathogens (e.g. P.syringae DC3000); this resistance involves at least callose deposition (PubMed:15923348, PubMed:20836879, PubMed:21564353). Required for the P.fluorescens WCS417r-triggered JA-dependent induced systemic resistance (ISR) against both P.syringae DC3000 and H.arabidopsidis (PubMed:20836879). Negative regulator of the ABA-dependent drought resistance (PubMed:19175769).</text>
</comment>
<comment type="interaction">
    <interactant intactId="EBI-4428411">
        <id>Q8H0V5</id>
    </interactant>
    <interactant intactId="EBI-4426127">
        <id>Q8GXL7</id>
        <label>GATA24</label>
    </interactant>
    <organismsDiffer>false</organismsDiffer>
    <experiments>4</experiments>
</comment>
<comment type="subcellular location">
    <subcellularLocation>
        <location evidence="2 5">Nucleus</location>
    </subcellularLocation>
</comment>
<comment type="induction">
    <text evidence="5 6">Constitutively expressed in healthy plants but repressed in response to infection by necrotrophic fungi (PubMed:15923348). Repressed by drought and abscisic acid (ABA) (PubMed:19175769).</text>
</comment>
<comment type="sequence caution" evidence="10">
    <conflict type="erroneous initiation">
        <sequence resource="EMBL-CDS" id="CAB96662"/>
    </conflict>
    <text>Truncated N-terminus.</text>
</comment>
<name>OCP3_ARATH</name>
<protein>
    <recommendedName>
        <fullName evidence="9">Protein OVEREXPRESSOR OF CATIONIC PEROXIDASE 3</fullName>
    </recommendedName>
</protein>
<proteinExistence type="evidence at protein level"/>
<sequence>MIKAMALSSAGVVSHLHPPSFSSSSGLSVNRVLFRNRNASPCGLSLPILNPSRSVLVFARGKNRKGFVSSSSSSPKKNKKKSLDGADNGGGEEEEDPFEALFNLLEEDLKNDNSDDEEISEEELEALADELARALGVGDDVDDIDLFGSVTGDVDVDVDNDDDDNDDDDNDDDDDDSEEDERPTKLKNWQLKRLAYALKAGRRKTSIKNLAAEVCLDRAYVLELLRDPPPKLLMLSATLPDEKPPVAAPENSSPDPSPVESLSAEDVVVEPKEKVKDEAVHVMQQRWSAQKRVKKAHIETLEKVYRRSKRPTNAVVSSIVQVTNLPRKRVLKWFEDKRAEDGVPDKRAPYQAPV</sequence>
<organism>
    <name type="scientific">Arabidopsis thaliana</name>
    <name type="common">Mouse-ear cress</name>
    <dbReference type="NCBI Taxonomy" id="3702"/>
    <lineage>
        <taxon>Eukaryota</taxon>
        <taxon>Viridiplantae</taxon>
        <taxon>Streptophyta</taxon>
        <taxon>Embryophyta</taxon>
        <taxon>Tracheophyta</taxon>
        <taxon>Spermatophyta</taxon>
        <taxon>Magnoliopsida</taxon>
        <taxon>eudicotyledons</taxon>
        <taxon>Gunneridae</taxon>
        <taxon>Pentapetalae</taxon>
        <taxon>rosids</taxon>
        <taxon>malvids</taxon>
        <taxon>Brassicales</taxon>
        <taxon>Brassicaceae</taxon>
        <taxon>Camelineae</taxon>
        <taxon>Arabidopsis</taxon>
    </lineage>
</organism>
<gene>
    <name evidence="9" type="primary">OCP3</name>
    <name evidence="11" type="ordered locus">At5g11270</name>
    <name evidence="12" type="ORF">F2I11.160</name>
</gene>
<evidence type="ECO:0000250" key="1">
    <source>
        <dbReference type="UniProtKB" id="Q70Z19"/>
    </source>
</evidence>
<evidence type="ECO:0000255" key="2">
    <source>
        <dbReference type="PROSITE-ProRule" id="PRU00108"/>
    </source>
</evidence>
<evidence type="ECO:0000255" key="3">
    <source>
        <dbReference type="PROSITE-ProRule" id="PRU00768"/>
    </source>
</evidence>
<evidence type="ECO:0000256" key="4">
    <source>
        <dbReference type="SAM" id="MobiDB-lite"/>
    </source>
</evidence>
<evidence type="ECO:0000269" key="5">
    <source>
    </source>
</evidence>
<evidence type="ECO:0000269" key="6">
    <source>
    </source>
</evidence>
<evidence type="ECO:0000269" key="7">
    <source>
    </source>
</evidence>
<evidence type="ECO:0000269" key="8">
    <source>
    </source>
</evidence>
<evidence type="ECO:0000303" key="9">
    <source>
    </source>
</evidence>
<evidence type="ECO:0000305" key="10"/>
<evidence type="ECO:0000312" key="11">
    <source>
        <dbReference type="Araport" id="AT5G11270"/>
    </source>
</evidence>
<evidence type="ECO:0000312" key="12">
    <source>
        <dbReference type="EMBL" id="CAB96662.1"/>
    </source>
</evidence>
<accession>Q8H0V5</accession>
<accession>Q9LFN0</accession>
<keyword id="KW-0938">Abscisic acid signaling pathway</keyword>
<keyword id="KW-0238">DNA-binding</keyword>
<keyword id="KW-0371">Homeobox</keyword>
<keyword id="KW-1184">Jasmonic acid signaling pathway</keyword>
<keyword id="KW-0539">Nucleus</keyword>
<keyword id="KW-0560">Oxidoreductase</keyword>
<keyword id="KW-0575">Peroxidase</keyword>
<keyword id="KW-0611">Plant defense</keyword>
<keyword id="KW-1185">Reference proteome</keyword>
<keyword id="KW-0677">Repeat</keyword>
<dbReference type="EMBL" id="AL360314">
    <property type="protein sequence ID" value="CAB96662.1"/>
    <property type="status" value="ALT_INIT"/>
    <property type="molecule type" value="Genomic_DNA"/>
</dbReference>
<dbReference type="EMBL" id="CP002688">
    <property type="protein sequence ID" value="AED91654.1"/>
    <property type="molecule type" value="Genomic_DNA"/>
</dbReference>
<dbReference type="EMBL" id="BT002017">
    <property type="protein sequence ID" value="AAN72028.1"/>
    <property type="molecule type" value="mRNA"/>
</dbReference>
<dbReference type="EMBL" id="BT008743">
    <property type="protein sequence ID" value="AAP42756.1"/>
    <property type="molecule type" value="mRNA"/>
</dbReference>
<dbReference type="RefSeq" id="NP_196688.2">
    <property type="nucleotide sequence ID" value="NM_121165.4"/>
</dbReference>
<dbReference type="SMR" id="Q8H0V5"/>
<dbReference type="FunCoup" id="Q8H0V5">
    <property type="interactions" value="1725"/>
</dbReference>
<dbReference type="IntAct" id="Q8H0V5">
    <property type="interactions" value="8"/>
</dbReference>
<dbReference type="STRING" id="3702.Q8H0V5"/>
<dbReference type="iPTMnet" id="Q8H0V5"/>
<dbReference type="PaxDb" id="3702-AT5G11270.1"/>
<dbReference type="ProteomicsDB" id="238994"/>
<dbReference type="EnsemblPlants" id="AT5G11270.1">
    <property type="protein sequence ID" value="AT5G11270.1"/>
    <property type="gene ID" value="AT5G11270"/>
</dbReference>
<dbReference type="GeneID" id="830997"/>
<dbReference type="Gramene" id="AT5G11270.1">
    <property type="protein sequence ID" value="AT5G11270.1"/>
    <property type="gene ID" value="AT5G11270"/>
</dbReference>
<dbReference type="KEGG" id="ath:AT5G11270"/>
<dbReference type="Araport" id="AT5G11270"/>
<dbReference type="TAIR" id="AT5G11270">
    <property type="gene designation" value="OCP3"/>
</dbReference>
<dbReference type="eggNOG" id="ENOG502QV0N">
    <property type="taxonomic scope" value="Eukaryota"/>
</dbReference>
<dbReference type="HOGENOM" id="CLU_051943_0_0_1"/>
<dbReference type="InParanoid" id="Q8H0V5"/>
<dbReference type="OMA" id="KRIVKWF"/>
<dbReference type="PhylomeDB" id="Q8H0V5"/>
<dbReference type="PRO" id="PR:Q8H0V5"/>
<dbReference type="Proteomes" id="UP000006548">
    <property type="component" value="Chromosome 5"/>
</dbReference>
<dbReference type="ExpressionAtlas" id="Q8H0V5">
    <property type="expression patterns" value="baseline and differential"/>
</dbReference>
<dbReference type="GO" id="GO:0005634">
    <property type="term" value="C:nucleus"/>
    <property type="evidence" value="ECO:0000314"/>
    <property type="project" value="TAIR"/>
</dbReference>
<dbReference type="GO" id="GO:0003677">
    <property type="term" value="F:DNA binding"/>
    <property type="evidence" value="ECO:0007669"/>
    <property type="project" value="UniProtKB-KW"/>
</dbReference>
<dbReference type="GO" id="GO:0004601">
    <property type="term" value="F:peroxidase activity"/>
    <property type="evidence" value="ECO:0007669"/>
    <property type="project" value="UniProtKB-KW"/>
</dbReference>
<dbReference type="GO" id="GO:0009738">
    <property type="term" value="P:abscisic acid-activated signaling pathway"/>
    <property type="evidence" value="ECO:0000315"/>
    <property type="project" value="UniProtKB"/>
</dbReference>
<dbReference type="GO" id="GO:0006952">
    <property type="term" value="P:defense response"/>
    <property type="evidence" value="ECO:0000315"/>
    <property type="project" value="TAIR"/>
</dbReference>
<dbReference type="GO" id="GO:0042742">
    <property type="term" value="P:defense response to bacterium"/>
    <property type="evidence" value="ECO:0000315"/>
    <property type="project" value="UniProtKB"/>
</dbReference>
<dbReference type="GO" id="GO:0050832">
    <property type="term" value="P:defense response to fungus"/>
    <property type="evidence" value="ECO:0000315"/>
    <property type="project" value="UniProtKB"/>
</dbReference>
<dbReference type="GO" id="GO:0002229">
    <property type="term" value="P:defense response to oomycetes"/>
    <property type="evidence" value="ECO:0000315"/>
    <property type="project" value="UniProtKB"/>
</dbReference>
<dbReference type="GO" id="GO:0009682">
    <property type="term" value="P:induced systemic resistance"/>
    <property type="evidence" value="ECO:0000315"/>
    <property type="project" value="UniProtKB"/>
</dbReference>
<dbReference type="GO" id="GO:0009867">
    <property type="term" value="P:jasmonic acid mediated signaling pathway"/>
    <property type="evidence" value="ECO:0000315"/>
    <property type="project" value="TAIR"/>
</dbReference>
<dbReference type="GO" id="GO:0009787">
    <property type="term" value="P:regulation of abscisic acid-activated signaling pathway"/>
    <property type="evidence" value="ECO:0000315"/>
    <property type="project" value="UniProtKB"/>
</dbReference>
<dbReference type="GO" id="GO:0031347">
    <property type="term" value="P:regulation of defense response"/>
    <property type="evidence" value="ECO:0000315"/>
    <property type="project" value="UniProtKB"/>
</dbReference>
<dbReference type="GO" id="GO:2000071">
    <property type="term" value="P:regulation of defense response by callose deposition"/>
    <property type="evidence" value="ECO:0000315"/>
    <property type="project" value="UniProtKB"/>
</dbReference>
<dbReference type="GO" id="GO:2000022">
    <property type="term" value="P:regulation of jasmonic acid mediated signaling pathway"/>
    <property type="evidence" value="ECO:0000315"/>
    <property type="project" value="UniProtKB"/>
</dbReference>
<dbReference type="GO" id="GO:0009737">
    <property type="term" value="P:response to abscisic acid"/>
    <property type="evidence" value="ECO:0000270"/>
    <property type="project" value="TAIR"/>
</dbReference>
<dbReference type="GO" id="GO:0009620">
    <property type="term" value="P:response to fungus"/>
    <property type="evidence" value="ECO:0000315"/>
    <property type="project" value="UniProtKB"/>
</dbReference>
<dbReference type="GO" id="GO:0009414">
    <property type="term" value="P:response to water deprivation"/>
    <property type="evidence" value="ECO:0000315"/>
    <property type="project" value="TAIR"/>
</dbReference>
<dbReference type="GO" id="GO:0010118">
    <property type="term" value="P:stomatal movement"/>
    <property type="evidence" value="ECO:0000315"/>
    <property type="project" value="TAIR"/>
</dbReference>
<dbReference type="CDD" id="cd00086">
    <property type="entry name" value="homeodomain"/>
    <property type="match status" value="1"/>
</dbReference>
<dbReference type="Gene3D" id="1.10.10.60">
    <property type="entry name" value="Homeodomain-like"/>
    <property type="match status" value="1"/>
</dbReference>
<dbReference type="InterPro" id="IPR001356">
    <property type="entry name" value="HD"/>
</dbReference>
<dbReference type="InterPro" id="IPR009057">
    <property type="entry name" value="Homeodomain-like_sf"/>
</dbReference>
<dbReference type="PANTHER" id="PTHR15467:SF9">
    <property type="entry name" value="HOMEOBOX DOMAIN-CONTAINING PROTEIN"/>
    <property type="match status" value="1"/>
</dbReference>
<dbReference type="PANTHER" id="PTHR15467">
    <property type="entry name" value="ZINC-FINGERS AND HOMEOBOXES RELATED"/>
    <property type="match status" value="1"/>
</dbReference>
<dbReference type="Pfam" id="PF00046">
    <property type="entry name" value="Homeodomain"/>
    <property type="match status" value="1"/>
</dbReference>
<dbReference type="SMART" id="SM00389">
    <property type="entry name" value="HOX"/>
    <property type="match status" value="1"/>
</dbReference>
<dbReference type="SUPFAM" id="SSF46689">
    <property type="entry name" value="Homeodomain-like"/>
    <property type="match status" value="1"/>
</dbReference>
<dbReference type="PROSITE" id="PS50071">
    <property type="entry name" value="HOMEOBOX_2"/>
    <property type="match status" value="1"/>
</dbReference>